<gene>
    <name type="primary">ydiH</name>
    <name type="ordered locus">b1685</name>
    <name type="ordered locus">JW1675</name>
</gene>
<keyword id="KW-1185">Reference proteome</keyword>
<sequence>MSTQLDPTQLAIEFLRRDQSNLSPAQYLKRLKQLELEFADLLTLSSAELKEEIYFAWRLGVH</sequence>
<feature type="chain" id="PRO_0000168991" description="Uncharacterized protein YdiH">
    <location>
        <begin position="1"/>
        <end position="62"/>
    </location>
</feature>
<comment type="sequence caution" evidence="1">
    <conflict type="erroneous initiation">
        <sequence resource="EMBL-CDS" id="BAE76501"/>
    </conflict>
</comment>
<reference key="1">
    <citation type="journal article" date="1997" name="Science">
        <title>The complete genome sequence of Escherichia coli K-12.</title>
        <authorList>
            <person name="Blattner F.R."/>
            <person name="Plunkett G. III"/>
            <person name="Bloch C.A."/>
            <person name="Perna N.T."/>
            <person name="Burland V."/>
            <person name="Riley M."/>
            <person name="Collado-Vides J."/>
            <person name="Glasner J.D."/>
            <person name="Rode C.K."/>
            <person name="Mayhew G.F."/>
            <person name="Gregor J."/>
            <person name="Davis N.W."/>
            <person name="Kirkpatrick H.A."/>
            <person name="Goeden M.A."/>
            <person name="Rose D.J."/>
            <person name="Mau B."/>
            <person name="Shao Y."/>
        </authorList>
    </citation>
    <scope>NUCLEOTIDE SEQUENCE [LARGE SCALE GENOMIC DNA]</scope>
    <source>
        <strain>K12 / MG1655 / ATCC 47076</strain>
    </source>
</reference>
<reference key="2">
    <citation type="journal article" date="2006" name="Mol. Syst. Biol.">
        <title>Highly accurate genome sequences of Escherichia coli K-12 strains MG1655 and W3110.</title>
        <authorList>
            <person name="Hayashi K."/>
            <person name="Morooka N."/>
            <person name="Yamamoto Y."/>
            <person name="Fujita K."/>
            <person name="Isono K."/>
            <person name="Choi S."/>
            <person name="Ohtsubo E."/>
            <person name="Baba T."/>
            <person name="Wanner B.L."/>
            <person name="Mori H."/>
            <person name="Horiuchi T."/>
        </authorList>
    </citation>
    <scope>NUCLEOTIDE SEQUENCE [LARGE SCALE GENOMIC DNA]</scope>
    <source>
        <strain>K12 / W3110 / ATCC 27325 / DSM 5911</strain>
    </source>
</reference>
<dbReference type="EMBL" id="U00096">
    <property type="protein sequence ID" value="AAC74755.2"/>
    <property type="molecule type" value="Genomic_DNA"/>
</dbReference>
<dbReference type="EMBL" id="AP009048">
    <property type="protein sequence ID" value="BAE76501.1"/>
    <property type="status" value="ALT_INIT"/>
    <property type="molecule type" value="Genomic_DNA"/>
</dbReference>
<dbReference type="PIR" id="E64926">
    <property type="entry name" value="E64926"/>
</dbReference>
<dbReference type="RefSeq" id="NP_416200.2">
    <property type="nucleotide sequence ID" value="NC_000913.3"/>
</dbReference>
<dbReference type="RefSeq" id="WP_001296104.1">
    <property type="nucleotide sequence ID" value="NZ_STEB01000003.1"/>
</dbReference>
<dbReference type="SMR" id="P64476"/>
<dbReference type="BioGRID" id="4261681">
    <property type="interactions" value="10"/>
</dbReference>
<dbReference type="DIP" id="DIP-47934N"/>
<dbReference type="FunCoup" id="P64476">
    <property type="interactions" value="105"/>
</dbReference>
<dbReference type="IntAct" id="P64476">
    <property type="interactions" value="13"/>
</dbReference>
<dbReference type="STRING" id="511145.b1685"/>
<dbReference type="jPOST" id="P64476"/>
<dbReference type="PaxDb" id="511145-b1685"/>
<dbReference type="EnsemblBacteria" id="AAC74755">
    <property type="protein sequence ID" value="AAC74755"/>
    <property type="gene ID" value="b1685"/>
</dbReference>
<dbReference type="GeneID" id="946194"/>
<dbReference type="KEGG" id="ecj:JW1675"/>
<dbReference type="KEGG" id="eco:b1685"/>
<dbReference type="KEGG" id="ecoc:C3026_09650"/>
<dbReference type="PATRIC" id="fig|511145.12.peg.1756"/>
<dbReference type="EchoBASE" id="EB3724"/>
<dbReference type="eggNOG" id="ENOG503301A">
    <property type="taxonomic scope" value="Bacteria"/>
</dbReference>
<dbReference type="HOGENOM" id="CLU_179884_0_0_6"/>
<dbReference type="InParanoid" id="P64476"/>
<dbReference type="OrthoDB" id="6560982at2"/>
<dbReference type="PhylomeDB" id="P64476"/>
<dbReference type="BioCyc" id="EcoCyc:G6911-MONOMER"/>
<dbReference type="PRO" id="PR:P64476"/>
<dbReference type="Proteomes" id="UP000000625">
    <property type="component" value="Chromosome"/>
</dbReference>
<dbReference type="InterPro" id="IPR031830">
    <property type="entry name" value="YdiH"/>
</dbReference>
<dbReference type="Pfam" id="PF15930">
    <property type="entry name" value="YdiH"/>
    <property type="match status" value="1"/>
</dbReference>
<organism>
    <name type="scientific">Escherichia coli (strain K12)</name>
    <dbReference type="NCBI Taxonomy" id="83333"/>
    <lineage>
        <taxon>Bacteria</taxon>
        <taxon>Pseudomonadati</taxon>
        <taxon>Pseudomonadota</taxon>
        <taxon>Gammaproteobacteria</taxon>
        <taxon>Enterobacterales</taxon>
        <taxon>Enterobacteriaceae</taxon>
        <taxon>Escherichia</taxon>
    </lineage>
</organism>
<name>YDIH_ECOLI</name>
<accession>P64476</accession>
<accession>P76195</accession>
<accession>Q2MB55</accession>
<evidence type="ECO:0000305" key="1"/>
<proteinExistence type="predicted"/>
<protein>
    <recommendedName>
        <fullName>Uncharacterized protein YdiH</fullName>
    </recommendedName>
</protein>